<comment type="similarity">
    <text evidence="1">Belongs to the bacterial ribosomal protein bS21 family.</text>
</comment>
<feature type="chain" id="PRO_1000120612" description="Small ribosomal subunit protein bS21">
    <location>
        <begin position="1"/>
        <end position="71"/>
    </location>
</feature>
<feature type="region of interest" description="Disordered" evidence="2">
    <location>
        <begin position="43"/>
        <end position="71"/>
    </location>
</feature>
<feature type="compositionally biased region" description="Basic residues" evidence="2">
    <location>
        <begin position="46"/>
        <end position="59"/>
    </location>
</feature>
<feature type="compositionally biased region" description="Basic and acidic residues" evidence="2">
    <location>
        <begin position="60"/>
        <end position="71"/>
    </location>
</feature>
<accession>B7MB01</accession>
<keyword id="KW-1185">Reference proteome</keyword>
<keyword id="KW-0687">Ribonucleoprotein</keyword>
<keyword id="KW-0689">Ribosomal protein</keyword>
<reference key="1">
    <citation type="journal article" date="2009" name="PLoS Genet.">
        <title>Organised genome dynamics in the Escherichia coli species results in highly diverse adaptive paths.</title>
        <authorList>
            <person name="Touchon M."/>
            <person name="Hoede C."/>
            <person name="Tenaillon O."/>
            <person name="Barbe V."/>
            <person name="Baeriswyl S."/>
            <person name="Bidet P."/>
            <person name="Bingen E."/>
            <person name="Bonacorsi S."/>
            <person name="Bouchier C."/>
            <person name="Bouvet O."/>
            <person name="Calteau A."/>
            <person name="Chiapello H."/>
            <person name="Clermont O."/>
            <person name="Cruveiller S."/>
            <person name="Danchin A."/>
            <person name="Diard M."/>
            <person name="Dossat C."/>
            <person name="Karoui M.E."/>
            <person name="Frapy E."/>
            <person name="Garry L."/>
            <person name="Ghigo J.M."/>
            <person name="Gilles A.M."/>
            <person name="Johnson J."/>
            <person name="Le Bouguenec C."/>
            <person name="Lescat M."/>
            <person name="Mangenot S."/>
            <person name="Martinez-Jehanne V."/>
            <person name="Matic I."/>
            <person name="Nassif X."/>
            <person name="Oztas S."/>
            <person name="Petit M.A."/>
            <person name="Pichon C."/>
            <person name="Rouy Z."/>
            <person name="Ruf C.S."/>
            <person name="Schneider D."/>
            <person name="Tourret J."/>
            <person name="Vacherie B."/>
            <person name="Vallenet D."/>
            <person name="Medigue C."/>
            <person name="Rocha E.P.C."/>
            <person name="Denamur E."/>
        </authorList>
    </citation>
    <scope>NUCLEOTIDE SEQUENCE [LARGE SCALE GENOMIC DNA]</scope>
    <source>
        <strain>S88 / ExPEC</strain>
    </source>
</reference>
<evidence type="ECO:0000255" key="1">
    <source>
        <dbReference type="HAMAP-Rule" id="MF_00358"/>
    </source>
</evidence>
<evidence type="ECO:0000256" key="2">
    <source>
        <dbReference type="SAM" id="MobiDB-lite"/>
    </source>
</evidence>
<evidence type="ECO:0000305" key="3"/>
<sequence>MPVIKVRENEPFDVALRRFKRSCEKAGVLAEVRRREFYEKPTTERKRAKASAVKRHAKKLARENARRTRLY</sequence>
<name>RS21_ECO45</name>
<dbReference type="EMBL" id="CU928161">
    <property type="protein sequence ID" value="CAR04692.1"/>
    <property type="molecule type" value="Genomic_DNA"/>
</dbReference>
<dbReference type="RefSeq" id="WP_001144069.1">
    <property type="nucleotide sequence ID" value="NC_011742.1"/>
</dbReference>
<dbReference type="SMR" id="B7MB01"/>
<dbReference type="GeneID" id="98390195"/>
<dbReference type="KEGG" id="ecz:ECS88_3463"/>
<dbReference type="HOGENOM" id="CLU_159258_1_0_6"/>
<dbReference type="Proteomes" id="UP000000747">
    <property type="component" value="Chromosome"/>
</dbReference>
<dbReference type="GO" id="GO:1990904">
    <property type="term" value="C:ribonucleoprotein complex"/>
    <property type="evidence" value="ECO:0007669"/>
    <property type="project" value="UniProtKB-KW"/>
</dbReference>
<dbReference type="GO" id="GO:0005840">
    <property type="term" value="C:ribosome"/>
    <property type="evidence" value="ECO:0007669"/>
    <property type="project" value="UniProtKB-KW"/>
</dbReference>
<dbReference type="GO" id="GO:0003735">
    <property type="term" value="F:structural constituent of ribosome"/>
    <property type="evidence" value="ECO:0007669"/>
    <property type="project" value="InterPro"/>
</dbReference>
<dbReference type="GO" id="GO:0006412">
    <property type="term" value="P:translation"/>
    <property type="evidence" value="ECO:0007669"/>
    <property type="project" value="UniProtKB-UniRule"/>
</dbReference>
<dbReference type="FunFam" id="1.20.5.1150:FF:000001">
    <property type="entry name" value="30S ribosomal protein S21"/>
    <property type="match status" value="1"/>
</dbReference>
<dbReference type="Gene3D" id="1.20.5.1150">
    <property type="entry name" value="Ribosomal protein S8"/>
    <property type="match status" value="1"/>
</dbReference>
<dbReference type="HAMAP" id="MF_00358">
    <property type="entry name" value="Ribosomal_bS21"/>
    <property type="match status" value="1"/>
</dbReference>
<dbReference type="InterPro" id="IPR001911">
    <property type="entry name" value="Ribosomal_bS21"/>
</dbReference>
<dbReference type="InterPro" id="IPR018278">
    <property type="entry name" value="Ribosomal_bS21_CS"/>
</dbReference>
<dbReference type="InterPro" id="IPR038380">
    <property type="entry name" value="Ribosomal_bS21_sf"/>
</dbReference>
<dbReference type="NCBIfam" id="TIGR00030">
    <property type="entry name" value="S21p"/>
    <property type="match status" value="1"/>
</dbReference>
<dbReference type="PANTHER" id="PTHR21109">
    <property type="entry name" value="MITOCHONDRIAL 28S RIBOSOMAL PROTEIN S21"/>
    <property type="match status" value="1"/>
</dbReference>
<dbReference type="PANTHER" id="PTHR21109:SF22">
    <property type="entry name" value="SMALL RIBOSOMAL SUBUNIT PROTEIN BS21"/>
    <property type="match status" value="1"/>
</dbReference>
<dbReference type="Pfam" id="PF01165">
    <property type="entry name" value="Ribosomal_S21"/>
    <property type="match status" value="1"/>
</dbReference>
<dbReference type="PRINTS" id="PR00976">
    <property type="entry name" value="RIBOSOMALS21"/>
</dbReference>
<dbReference type="PROSITE" id="PS01181">
    <property type="entry name" value="RIBOSOMAL_S21"/>
    <property type="match status" value="1"/>
</dbReference>
<organism>
    <name type="scientific">Escherichia coli O45:K1 (strain S88 / ExPEC)</name>
    <dbReference type="NCBI Taxonomy" id="585035"/>
    <lineage>
        <taxon>Bacteria</taxon>
        <taxon>Pseudomonadati</taxon>
        <taxon>Pseudomonadota</taxon>
        <taxon>Gammaproteobacteria</taxon>
        <taxon>Enterobacterales</taxon>
        <taxon>Enterobacteriaceae</taxon>
        <taxon>Escherichia</taxon>
    </lineage>
</organism>
<proteinExistence type="inferred from homology"/>
<protein>
    <recommendedName>
        <fullName evidence="1">Small ribosomal subunit protein bS21</fullName>
    </recommendedName>
    <alternativeName>
        <fullName evidence="3">30S ribosomal protein S21</fullName>
    </alternativeName>
</protein>
<gene>
    <name evidence="1" type="primary">rpsU</name>
    <name type="ordered locus">ECS88_3463</name>
</gene>